<feature type="chain" id="PRO_1000081818" description="Small ribosomal subunit protein uS9">
    <location>
        <begin position="1"/>
        <end position="130"/>
    </location>
</feature>
<gene>
    <name evidence="1" type="primary">rpsI</name>
    <name type="ordered locus">Gura_1050</name>
</gene>
<protein>
    <recommendedName>
        <fullName evidence="1">Small ribosomal subunit protein uS9</fullName>
    </recommendedName>
    <alternativeName>
        <fullName evidence="2">30S ribosomal protein S9</fullName>
    </alternativeName>
</protein>
<sequence length="130" mass="14217">MAAASFYGTGKRKSSIARVWLKPGTGVITVNHKTLDEYFGRETSKMVVKQPLELTENMGKFDIYVTVCGGGDSGQAGAIKHGITKALLEVDAALRGTLKKAGFVTRDSRIKERKKYGKKAARASFQFSKR</sequence>
<organism>
    <name type="scientific">Geotalea uraniireducens (strain Rf4)</name>
    <name type="common">Geobacter uraniireducens</name>
    <dbReference type="NCBI Taxonomy" id="351605"/>
    <lineage>
        <taxon>Bacteria</taxon>
        <taxon>Pseudomonadati</taxon>
        <taxon>Thermodesulfobacteriota</taxon>
        <taxon>Desulfuromonadia</taxon>
        <taxon>Geobacterales</taxon>
        <taxon>Geobacteraceae</taxon>
        <taxon>Geotalea</taxon>
    </lineage>
</organism>
<proteinExistence type="inferred from homology"/>
<comment type="similarity">
    <text evidence="1">Belongs to the universal ribosomal protein uS9 family.</text>
</comment>
<accession>A5GAY7</accession>
<dbReference type="EMBL" id="CP000698">
    <property type="protein sequence ID" value="ABQ25256.1"/>
    <property type="molecule type" value="Genomic_DNA"/>
</dbReference>
<dbReference type="RefSeq" id="WP_011937980.1">
    <property type="nucleotide sequence ID" value="NC_009483.1"/>
</dbReference>
<dbReference type="SMR" id="A5GAY7"/>
<dbReference type="STRING" id="351605.Gura_1050"/>
<dbReference type="KEGG" id="gur:Gura_1050"/>
<dbReference type="HOGENOM" id="CLU_046483_2_1_7"/>
<dbReference type="OrthoDB" id="9803965at2"/>
<dbReference type="Proteomes" id="UP000006695">
    <property type="component" value="Chromosome"/>
</dbReference>
<dbReference type="GO" id="GO:0022627">
    <property type="term" value="C:cytosolic small ribosomal subunit"/>
    <property type="evidence" value="ECO:0007669"/>
    <property type="project" value="TreeGrafter"/>
</dbReference>
<dbReference type="GO" id="GO:0003723">
    <property type="term" value="F:RNA binding"/>
    <property type="evidence" value="ECO:0007669"/>
    <property type="project" value="TreeGrafter"/>
</dbReference>
<dbReference type="GO" id="GO:0003735">
    <property type="term" value="F:structural constituent of ribosome"/>
    <property type="evidence" value="ECO:0007669"/>
    <property type="project" value="InterPro"/>
</dbReference>
<dbReference type="GO" id="GO:0006412">
    <property type="term" value="P:translation"/>
    <property type="evidence" value="ECO:0007669"/>
    <property type="project" value="UniProtKB-UniRule"/>
</dbReference>
<dbReference type="FunFam" id="3.30.230.10:FF:000001">
    <property type="entry name" value="30S ribosomal protein S9"/>
    <property type="match status" value="1"/>
</dbReference>
<dbReference type="Gene3D" id="3.30.230.10">
    <property type="match status" value="1"/>
</dbReference>
<dbReference type="HAMAP" id="MF_00532_B">
    <property type="entry name" value="Ribosomal_uS9_B"/>
    <property type="match status" value="1"/>
</dbReference>
<dbReference type="InterPro" id="IPR020568">
    <property type="entry name" value="Ribosomal_Su5_D2-typ_SF"/>
</dbReference>
<dbReference type="InterPro" id="IPR000754">
    <property type="entry name" value="Ribosomal_uS9"/>
</dbReference>
<dbReference type="InterPro" id="IPR023035">
    <property type="entry name" value="Ribosomal_uS9_bac/plastid"/>
</dbReference>
<dbReference type="InterPro" id="IPR020574">
    <property type="entry name" value="Ribosomal_uS9_CS"/>
</dbReference>
<dbReference type="InterPro" id="IPR014721">
    <property type="entry name" value="Ribsml_uS5_D2-typ_fold_subgr"/>
</dbReference>
<dbReference type="NCBIfam" id="NF001099">
    <property type="entry name" value="PRK00132.1"/>
    <property type="match status" value="1"/>
</dbReference>
<dbReference type="PANTHER" id="PTHR21569">
    <property type="entry name" value="RIBOSOMAL PROTEIN S9"/>
    <property type="match status" value="1"/>
</dbReference>
<dbReference type="PANTHER" id="PTHR21569:SF1">
    <property type="entry name" value="SMALL RIBOSOMAL SUBUNIT PROTEIN US9M"/>
    <property type="match status" value="1"/>
</dbReference>
<dbReference type="Pfam" id="PF00380">
    <property type="entry name" value="Ribosomal_S9"/>
    <property type="match status" value="1"/>
</dbReference>
<dbReference type="SUPFAM" id="SSF54211">
    <property type="entry name" value="Ribosomal protein S5 domain 2-like"/>
    <property type="match status" value="1"/>
</dbReference>
<dbReference type="PROSITE" id="PS00360">
    <property type="entry name" value="RIBOSOMAL_S9"/>
    <property type="match status" value="1"/>
</dbReference>
<evidence type="ECO:0000255" key="1">
    <source>
        <dbReference type="HAMAP-Rule" id="MF_00532"/>
    </source>
</evidence>
<evidence type="ECO:0000305" key="2"/>
<name>RS9_GEOUR</name>
<reference key="1">
    <citation type="submission" date="2007-05" db="EMBL/GenBank/DDBJ databases">
        <title>Complete sequence of Geobacter uraniireducens Rf4.</title>
        <authorList>
            <consortium name="US DOE Joint Genome Institute"/>
            <person name="Copeland A."/>
            <person name="Lucas S."/>
            <person name="Lapidus A."/>
            <person name="Barry K."/>
            <person name="Detter J.C."/>
            <person name="Glavina del Rio T."/>
            <person name="Hammon N."/>
            <person name="Israni S."/>
            <person name="Dalin E."/>
            <person name="Tice H."/>
            <person name="Pitluck S."/>
            <person name="Chertkov O."/>
            <person name="Brettin T."/>
            <person name="Bruce D."/>
            <person name="Han C."/>
            <person name="Schmutz J."/>
            <person name="Larimer F."/>
            <person name="Land M."/>
            <person name="Hauser L."/>
            <person name="Kyrpides N."/>
            <person name="Mikhailova N."/>
            <person name="Shelobolina E."/>
            <person name="Aklujkar M."/>
            <person name="Lovley D."/>
            <person name="Richardson P."/>
        </authorList>
    </citation>
    <scope>NUCLEOTIDE SEQUENCE [LARGE SCALE GENOMIC DNA]</scope>
    <source>
        <strain>ATCC BAA-1134 / JCM 13001 / Rf4</strain>
    </source>
</reference>
<keyword id="KW-1185">Reference proteome</keyword>
<keyword id="KW-0687">Ribonucleoprotein</keyword>
<keyword id="KW-0689">Ribosomal protein</keyword>